<name>ADT2_ARATH</name>
<accession>P40941</accession>
<accession>Q9FY52</accession>
<gene>
    <name type="primary">AAC2</name>
    <name type="synonym">ANT2</name>
    <name type="ordered locus">At5g13490</name>
    <name type="ORF">T6I14_20</name>
</gene>
<organism>
    <name type="scientific">Arabidopsis thaliana</name>
    <name type="common">Mouse-ear cress</name>
    <dbReference type="NCBI Taxonomy" id="3702"/>
    <lineage>
        <taxon>Eukaryota</taxon>
        <taxon>Viridiplantae</taxon>
        <taxon>Streptophyta</taxon>
        <taxon>Embryophyta</taxon>
        <taxon>Tracheophyta</taxon>
        <taxon>Spermatophyta</taxon>
        <taxon>Magnoliopsida</taxon>
        <taxon>eudicotyledons</taxon>
        <taxon>Gunneridae</taxon>
        <taxon>Pentapetalae</taxon>
        <taxon>rosids</taxon>
        <taxon>malvids</taxon>
        <taxon>Brassicales</taxon>
        <taxon>Brassicaceae</taxon>
        <taxon>Camelineae</taxon>
        <taxon>Arabidopsis</taxon>
    </lineage>
</organism>
<proteinExistence type="evidence at protein level"/>
<protein>
    <recommendedName>
        <fullName>ADP,ATP carrier protein 2, mitochondrial</fullName>
    </recommendedName>
    <alternativeName>
        <fullName>ADP/ATP translocase 2</fullName>
    </alternativeName>
    <alternativeName>
        <fullName>Adenine nucleotide translocator 2</fullName>
        <shortName>ANT 2</shortName>
    </alternativeName>
</protein>
<dbReference type="EMBL" id="X68592">
    <property type="protein sequence ID" value="CAA48579.1"/>
    <property type="molecule type" value="mRNA"/>
</dbReference>
<dbReference type="EMBL" id="AL391710">
    <property type="protein sequence ID" value="CAC05426.1"/>
    <property type="molecule type" value="Genomic_DNA"/>
</dbReference>
<dbReference type="EMBL" id="CP002688">
    <property type="protein sequence ID" value="AED91901.1"/>
    <property type="molecule type" value="Genomic_DNA"/>
</dbReference>
<dbReference type="EMBL" id="CP002688">
    <property type="protein sequence ID" value="AED91902.1"/>
    <property type="molecule type" value="Genomic_DNA"/>
</dbReference>
<dbReference type="EMBL" id="AY050857">
    <property type="protein sequence ID" value="AAK92794.1"/>
    <property type="molecule type" value="mRNA"/>
</dbReference>
<dbReference type="EMBL" id="AY079407">
    <property type="protein sequence ID" value="AAL85138.1"/>
    <property type="molecule type" value="mRNA"/>
</dbReference>
<dbReference type="PIR" id="S29852">
    <property type="entry name" value="S29852"/>
</dbReference>
<dbReference type="RefSeq" id="NP_001031876.1">
    <property type="nucleotide sequence ID" value="NM_001036799.2"/>
</dbReference>
<dbReference type="RefSeq" id="NP_196853.1">
    <property type="nucleotide sequence ID" value="NM_121352.4"/>
</dbReference>
<dbReference type="SMR" id="P40941"/>
<dbReference type="BioGRID" id="16471">
    <property type="interactions" value="38"/>
</dbReference>
<dbReference type="FunCoup" id="P40941">
    <property type="interactions" value="2269"/>
</dbReference>
<dbReference type="IntAct" id="P40941">
    <property type="interactions" value="2"/>
</dbReference>
<dbReference type="STRING" id="3702.P40941"/>
<dbReference type="SwissPalm" id="P40941"/>
<dbReference type="PaxDb" id="3702-AT5G13490.1"/>
<dbReference type="ProteomicsDB" id="244649"/>
<dbReference type="DNASU" id="831193"/>
<dbReference type="EnsemblPlants" id="AT5G13490.1">
    <property type="protein sequence ID" value="AT5G13490.1"/>
    <property type="gene ID" value="AT5G13490"/>
</dbReference>
<dbReference type="EnsemblPlants" id="AT5G13490.2">
    <property type="protein sequence ID" value="AT5G13490.2"/>
    <property type="gene ID" value="AT5G13490"/>
</dbReference>
<dbReference type="GeneID" id="831193"/>
<dbReference type="Gramene" id="AT5G13490.1">
    <property type="protein sequence ID" value="AT5G13490.1"/>
    <property type="gene ID" value="AT5G13490"/>
</dbReference>
<dbReference type="Gramene" id="AT5G13490.2">
    <property type="protein sequence ID" value="AT5G13490.2"/>
    <property type="gene ID" value="AT5G13490"/>
</dbReference>
<dbReference type="KEGG" id="ath:AT5G13490"/>
<dbReference type="Araport" id="AT5G13490"/>
<dbReference type="TAIR" id="AT5G13490">
    <property type="gene designation" value="AAC2"/>
</dbReference>
<dbReference type="eggNOG" id="KOG0749">
    <property type="taxonomic scope" value="Eukaryota"/>
</dbReference>
<dbReference type="HOGENOM" id="CLU_015166_12_1_1"/>
<dbReference type="InParanoid" id="P40941"/>
<dbReference type="OMA" id="PVHERQY"/>
<dbReference type="OrthoDB" id="270584at2759"/>
<dbReference type="PhylomeDB" id="P40941"/>
<dbReference type="CD-CODE" id="4299E36E">
    <property type="entry name" value="Nucleolus"/>
</dbReference>
<dbReference type="PRO" id="PR:P40941"/>
<dbReference type="Proteomes" id="UP000006548">
    <property type="component" value="Chromosome 5"/>
</dbReference>
<dbReference type="ExpressionAtlas" id="P40941">
    <property type="expression patterns" value="baseline and differential"/>
</dbReference>
<dbReference type="GO" id="GO:0009941">
    <property type="term" value="C:chloroplast envelope"/>
    <property type="evidence" value="ECO:0007005"/>
    <property type="project" value="TAIR"/>
</dbReference>
<dbReference type="GO" id="GO:0005740">
    <property type="term" value="C:mitochondrial envelope"/>
    <property type="evidence" value="ECO:0000304"/>
    <property type="project" value="TAIR"/>
</dbReference>
<dbReference type="GO" id="GO:0005743">
    <property type="term" value="C:mitochondrial inner membrane"/>
    <property type="evidence" value="ECO:0007669"/>
    <property type="project" value="UniProtKB-SubCell"/>
</dbReference>
<dbReference type="GO" id="GO:0005739">
    <property type="term" value="C:mitochondrion"/>
    <property type="evidence" value="ECO:0007005"/>
    <property type="project" value="TAIR"/>
</dbReference>
<dbReference type="GO" id="GO:0000325">
    <property type="term" value="C:plant-type vacuole"/>
    <property type="evidence" value="ECO:0007005"/>
    <property type="project" value="TAIR"/>
</dbReference>
<dbReference type="GO" id="GO:0009536">
    <property type="term" value="C:plastid"/>
    <property type="evidence" value="ECO:0007005"/>
    <property type="project" value="TAIR"/>
</dbReference>
<dbReference type="GO" id="GO:0005471">
    <property type="term" value="F:ATP:ADP antiporter activity"/>
    <property type="evidence" value="ECO:0000314"/>
    <property type="project" value="TAIR"/>
</dbReference>
<dbReference type="GO" id="GO:0005507">
    <property type="term" value="F:copper ion binding"/>
    <property type="evidence" value="ECO:0007005"/>
    <property type="project" value="TAIR"/>
</dbReference>
<dbReference type="GO" id="GO:0140021">
    <property type="term" value="P:mitochondrial ADP transmembrane transport"/>
    <property type="evidence" value="ECO:0007669"/>
    <property type="project" value="InterPro"/>
</dbReference>
<dbReference type="GO" id="GO:1990544">
    <property type="term" value="P:mitochondrial ATP transmembrane transport"/>
    <property type="evidence" value="ECO:0007669"/>
    <property type="project" value="InterPro"/>
</dbReference>
<dbReference type="GO" id="GO:0015865">
    <property type="term" value="P:purine nucleotide transport"/>
    <property type="evidence" value="ECO:0000314"/>
    <property type="project" value="TAIR"/>
</dbReference>
<dbReference type="FunFam" id="1.50.40.10:FF:000001">
    <property type="entry name" value="ADP,ATP carrier protein, mitochondrial"/>
    <property type="match status" value="1"/>
</dbReference>
<dbReference type="Gene3D" id="1.50.40.10">
    <property type="entry name" value="Mitochondrial carrier domain"/>
    <property type="match status" value="1"/>
</dbReference>
<dbReference type="InterPro" id="IPR002113">
    <property type="entry name" value="ADT_euk_type"/>
</dbReference>
<dbReference type="InterPro" id="IPR002067">
    <property type="entry name" value="Mit_carrier"/>
</dbReference>
<dbReference type="InterPro" id="IPR018108">
    <property type="entry name" value="Mitochondrial_sb/sol_carrier"/>
</dbReference>
<dbReference type="InterPro" id="IPR023395">
    <property type="entry name" value="Mt_carrier_dom_sf"/>
</dbReference>
<dbReference type="PANTHER" id="PTHR45635">
    <property type="entry name" value="ADP,ATP CARRIER PROTEIN 1-RELATED-RELATED"/>
    <property type="match status" value="1"/>
</dbReference>
<dbReference type="PANTHER" id="PTHR45635:SF52">
    <property type="entry name" value="ADP,ATP CARRIER PROTEIN 2, MITOCHONDRIAL"/>
    <property type="match status" value="1"/>
</dbReference>
<dbReference type="Pfam" id="PF00153">
    <property type="entry name" value="Mito_carr"/>
    <property type="match status" value="3"/>
</dbReference>
<dbReference type="PRINTS" id="PR00927">
    <property type="entry name" value="ADPTRNSLCASE"/>
</dbReference>
<dbReference type="PRINTS" id="PR00926">
    <property type="entry name" value="MITOCARRIER"/>
</dbReference>
<dbReference type="SUPFAM" id="SSF103506">
    <property type="entry name" value="Mitochondrial carrier"/>
    <property type="match status" value="1"/>
</dbReference>
<dbReference type="PROSITE" id="PS50920">
    <property type="entry name" value="SOLCAR"/>
    <property type="match status" value="3"/>
</dbReference>
<reference key="1">
    <citation type="journal article" date="1993" name="Biochim. Biophys. Acta">
        <title>An adenine nucleotide translocator gene from Arabidopsis thaliana.</title>
        <authorList>
            <person name="Schuster W."/>
            <person name="Kloska S."/>
            <person name="Brennicke A."/>
        </authorList>
    </citation>
    <scope>NUCLEOTIDE SEQUENCE [MRNA]</scope>
    <source>
        <strain>cv. Columbia</strain>
    </source>
</reference>
<reference key="2">
    <citation type="journal article" date="2000" name="Nature">
        <title>Sequence and analysis of chromosome 5 of the plant Arabidopsis thaliana.</title>
        <authorList>
            <person name="Tabata S."/>
            <person name="Kaneko T."/>
            <person name="Nakamura Y."/>
            <person name="Kotani H."/>
            <person name="Kato T."/>
            <person name="Asamizu E."/>
            <person name="Miyajima N."/>
            <person name="Sasamoto S."/>
            <person name="Kimura T."/>
            <person name="Hosouchi T."/>
            <person name="Kawashima K."/>
            <person name="Kohara M."/>
            <person name="Matsumoto M."/>
            <person name="Matsuno A."/>
            <person name="Muraki A."/>
            <person name="Nakayama S."/>
            <person name="Nakazaki N."/>
            <person name="Naruo K."/>
            <person name="Okumura S."/>
            <person name="Shinpo S."/>
            <person name="Takeuchi C."/>
            <person name="Wada T."/>
            <person name="Watanabe A."/>
            <person name="Yamada M."/>
            <person name="Yasuda M."/>
            <person name="Sato S."/>
            <person name="de la Bastide M."/>
            <person name="Huang E."/>
            <person name="Spiegel L."/>
            <person name="Gnoj L."/>
            <person name="O'Shaughnessy A."/>
            <person name="Preston R."/>
            <person name="Habermann K."/>
            <person name="Murray J."/>
            <person name="Johnson D."/>
            <person name="Rohlfing T."/>
            <person name="Nelson J."/>
            <person name="Stoneking T."/>
            <person name="Pepin K."/>
            <person name="Spieth J."/>
            <person name="Sekhon M."/>
            <person name="Armstrong J."/>
            <person name="Becker M."/>
            <person name="Belter E."/>
            <person name="Cordum H."/>
            <person name="Cordes M."/>
            <person name="Courtney L."/>
            <person name="Courtney W."/>
            <person name="Dante M."/>
            <person name="Du H."/>
            <person name="Edwards J."/>
            <person name="Fryman J."/>
            <person name="Haakensen B."/>
            <person name="Lamar E."/>
            <person name="Latreille P."/>
            <person name="Leonard S."/>
            <person name="Meyer R."/>
            <person name="Mulvaney E."/>
            <person name="Ozersky P."/>
            <person name="Riley A."/>
            <person name="Strowmatt C."/>
            <person name="Wagner-McPherson C."/>
            <person name="Wollam A."/>
            <person name="Yoakum M."/>
            <person name="Bell M."/>
            <person name="Dedhia N."/>
            <person name="Parnell L."/>
            <person name="Shah R."/>
            <person name="Rodriguez M."/>
            <person name="Hoon See L."/>
            <person name="Vil D."/>
            <person name="Baker J."/>
            <person name="Kirchoff K."/>
            <person name="Toth K."/>
            <person name="King L."/>
            <person name="Bahret A."/>
            <person name="Miller B."/>
            <person name="Marra M.A."/>
            <person name="Martienssen R."/>
            <person name="McCombie W.R."/>
            <person name="Wilson R.K."/>
            <person name="Murphy G."/>
            <person name="Bancroft I."/>
            <person name="Volckaert G."/>
            <person name="Wambutt R."/>
            <person name="Duesterhoeft A."/>
            <person name="Stiekema W."/>
            <person name="Pohl T."/>
            <person name="Entian K.-D."/>
            <person name="Terryn N."/>
            <person name="Hartley N."/>
            <person name="Bent E."/>
            <person name="Johnson S."/>
            <person name="Langham S.-A."/>
            <person name="McCullagh B."/>
            <person name="Robben J."/>
            <person name="Grymonprez B."/>
            <person name="Zimmermann W."/>
            <person name="Ramsperger U."/>
            <person name="Wedler H."/>
            <person name="Balke K."/>
            <person name="Wedler E."/>
            <person name="Peters S."/>
            <person name="van Staveren M."/>
            <person name="Dirkse W."/>
            <person name="Mooijman P."/>
            <person name="Klein Lankhorst R."/>
            <person name="Weitzenegger T."/>
            <person name="Bothe G."/>
            <person name="Rose M."/>
            <person name="Hauf J."/>
            <person name="Berneiser S."/>
            <person name="Hempel S."/>
            <person name="Feldpausch M."/>
            <person name="Lamberth S."/>
            <person name="Villarroel R."/>
            <person name="Gielen J."/>
            <person name="Ardiles W."/>
            <person name="Bents O."/>
            <person name="Lemcke K."/>
            <person name="Kolesov G."/>
            <person name="Mayer K.F.X."/>
            <person name="Rudd S."/>
            <person name="Schoof H."/>
            <person name="Schueller C."/>
            <person name="Zaccaria P."/>
            <person name="Mewes H.-W."/>
            <person name="Bevan M."/>
            <person name="Fransz P.F."/>
        </authorList>
    </citation>
    <scope>NUCLEOTIDE SEQUENCE [LARGE SCALE GENOMIC DNA]</scope>
    <source>
        <strain>cv. Columbia</strain>
    </source>
</reference>
<reference key="3">
    <citation type="journal article" date="2017" name="Plant J.">
        <title>Araport11: a complete reannotation of the Arabidopsis thaliana reference genome.</title>
        <authorList>
            <person name="Cheng C.Y."/>
            <person name="Krishnakumar V."/>
            <person name="Chan A.P."/>
            <person name="Thibaud-Nissen F."/>
            <person name="Schobel S."/>
            <person name="Town C.D."/>
        </authorList>
    </citation>
    <scope>GENOME REANNOTATION</scope>
    <source>
        <strain>cv. Columbia</strain>
    </source>
</reference>
<reference key="4">
    <citation type="journal article" date="2003" name="Science">
        <title>Empirical analysis of transcriptional activity in the Arabidopsis genome.</title>
        <authorList>
            <person name="Yamada K."/>
            <person name="Lim J."/>
            <person name="Dale J.M."/>
            <person name="Chen H."/>
            <person name="Shinn P."/>
            <person name="Palm C.J."/>
            <person name="Southwick A.M."/>
            <person name="Wu H.C."/>
            <person name="Kim C.J."/>
            <person name="Nguyen M."/>
            <person name="Pham P.K."/>
            <person name="Cheuk R.F."/>
            <person name="Karlin-Newmann G."/>
            <person name="Liu S.X."/>
            <person name="Lam B."/>
            <person name="Sakano H."/>
            <person name="Wu T."/>
            <person name="Yu G."/>
            <person name="Miranda M."/>
            <person name="Quach H.L."/>
            <person name="Tripp M."/>
            <person name="Chang C.H."/>
            <person name="Lee J.M."/>
            <person name="Toriumi M.J."/>
            <person name="Chan M.M."/>
            <person name="Tang C.C."/>
            <person name="Onodera C.S."/>
            <person name="Deng J.M."/>
            <person name="Akiyama K."/>
            <person name="Ansari Y."/>
            <person name="Arakawa T."/>
            <person name="Banh J."/>
            <person name="Banno F."/>
            <person name="Bowser L."/>
            <person name="Brooks S.Y."/>
            <person name="Carninci P."/>
            <person name="Chao Q."/>
            <person name="Choy N."/>
            <person name="Enju A."/>
            <person name="Goldsmith A.D."/>
            <person name="Gurjal M."/>
            <person name="Hansen N.F."/>
            <person name="Hayashizaki Y."/>
            <person name="Johnson-Hopson C."/>
            <person name="Hsuan V.W."/>
            <person name="Iida K."/>
            <person name="Karnes M."/>
            <person name="Khan S."/>
            <person name="Koesema E."/>
            <person name="Ishida J."/>
            <person name="Jiang P.X."/>
            <person name="Jones T."/>
            <person name="Kawai J."/>
            <person name="Kamiya A."/>
            <person name="Meyers C."/>
            <person name="Nakajima M."/>
            <person name="Narusaka M."/>
            <person name="Seki M."/>
            <person name="Sakurai T."/>
            <person name="Satou M."/>
            <person name="Tamse R."/>
            <person name="Vaysberg M."/>
            <person name="Wallender E.K."/>
            <person name="Wong C."/>
            <person name="Yamamura Y."/>
            <person name="Yuan S."/>
            <person name="Shinozaki K."/>
            <person name="Davis R.W."/>
            <person name="Theologis A."/>
            <person name="Ecker J.R."/>
        </authorList>
    </citation>
    <scope>NUCLEOTIDE SEQUENCE [LARGE SCALE MRNA]</scope>
    <source>
        <strain>cv. Columbia</strain>
    </source>
</reference>
<reference key="5">
    <citation type="journal article" date="2004" name="Plant Cell">
        <title>Experimental analysis of the Arabidopsis mitochondrial proteome highlights signaling and regulatory components, provides assessment of targeting prediction programs, and indicates plant-specific mitochondrial proteins.</title>
        <authorList>
            <person name="Heazlewood J.L."/>
            <person name="Tonti-Filippini J.S."/>
            <person name="Gout A.M."/>
            <person name="Day D.A."/>
            <person name="Whelan J."/>
            <person name="Millar A.H."/>
        </authorList>
    </citation>
    <scope>IDENTIFICATION BY MASS SPECTROMETRY</scope>
    <scope>SUBCELLULAR LOCATION [LARGE SCALE ANALYSIS]</scope>
    <source>
        <strain>cv. Landsberg erecta</strain>
    </source>
</reference>
<reference key="6">
    <citation type="journal article" date="2004" name="Trends Plant Sci.">
        <title>The growing family of mitochondrial carriers in Arabidopsis.</title>
        <authorList>
            <person name="Picault N."/>
            <person name="Hodges M."/>
            <person name="Palmieri L."/>
            <person name="Palmieri F."/>
        </authorList>
    </citation>
    <scope>GENE FAMILY</scope>
</reference>
<keyword id="KW-0050">Antiport</keyword>
<keyword id="KW-0472">Membrane</keyword>
<keyword id="KW-0496">Mitochondrion</keyword>
<keyword id="KW-0999">Mitochondrion inner membrane</keyword>
<keyword id="KW-1185">Reference proteome</keyword>
<keyword id="KW-0677">Repeat</keyword>
<keyword id="KW-0809">Transit peptide</keyword>
<keyword id="KW-0812">Transmembrane</keyword>
<keyword id="KW-1133">Transmembrane helix</keyword>
<keyword id="KW-0813">Transport</keyword>
<evidence type="ECO:0000250" key="1">
    <source>
        <dbReference type="UniProtKB" id="G2QNH0"/>
    </source>
</evidence>
<evidence type="ECO:0000250" key="2">
    <source>
        <dbReference type="UniProtKB" id="P02722"/>
    </source>
</evidence>
<evidence type="ECO:0000250" key="3">
    <source>
        <dbReference type="UniProtKB" id="P12235"/>
    </source>
</evidence>
<evidence type="ECO:0000250" key="4">
    <source>
        <dbReference type="UniProtKB" id="P18239"/>
    </source>
</evidence>
<evidence type="ECO:0000250" key="5">
    <source>
        <dbReference type="UniProtKB" id="P48962"/>
    </source>
</evidence>
<evidence type="ECO:0000255" key="6"/>
<evidence type="ECO:0000269" key="7">
    <source>
    </source>
</evidence>
<evidence type="ECO:0000305" key="8"/>
<sequence length="385" mass="41746">MVEQTQHPTILQKVSGQLLSSSVSQDIRGYASASKRPATYQKHAAYGNYSNAAFQYPLVAASQIATTTSPVFVQAPGEKGFTNFAIDFMMGGVSAAVSKTAAAPIERVKLLIQNQDEMLKAGRLTEPYKGIRDCFGRTIRDEGIGSLWRGNTANVIRYFPTQALNFAFKDYFKRLFNFKKDKDGYWKWFAGNLASGGAAGASSLLFVYSLDYARTRLANDSKSAKKGGGERQFNGLVDVYKKTLKSDGIAGLYRGFNISCAGIIVYRGLYFGLYDSVKPVLLTGDLQDSFFASFALGWLITNGAGLASYPIDTVRRRMMMTSGEAVKYKSSFDAFSQIVKKEGAKSLFKGAGANILRAVAGAGVLAGYDKLQLIVFGKKYGSGGA</sequence>
<feature type="transit peptide" description="Mitochondrion" evidence="6">
    <location>
        <begin position="1"/>
        <end position="74"/>
    </location>
</feature>
<feature type="chain" id="PRO_0000019246" description="ADP,ATP carrier protein 2, mitochondrial">
    <location>
        <begin position="75"/>
        <end position="385"/>
    </location>
</feature>
<feature type="transmembrane region" description="Helical; Name=1" evidence="4">
    <location>
        <begin position="84"/>
        <end position="111"/>
    </location>
</feature>
<feature type="transmembrane region" description="Helical; Name=2" evidence="4">
    <location>
        <begin position="152"/>
        <end position="176"/>
    </location>
</feature>
<feature type="transmembrane region" description="Helical; Name=3" evidence="4">
    <location>
        <begin position="185"/>
        <end position="205"/>
    </location>
</feature>
<feature type="transmembrane region" description="Helical; Name=4" evidence="4">
    <location>
        <begin position="256"/>
        <end position="277"/>
    </location>
</feature>
<feature type="transmembrane region" description="Helical; Name=5" evidence="4">
    <location>
        <begin position="291"/>
        <end position="311"/>
    </location>
</feature>
<feature type="transmembrane region" description="Helical; Name=6" evidence="4">
    <location>
        <begin position="351"/>
        <end position="371"/>
    </location>
</feature>
<feature type="repeat" description="Solcar 1">
    <location>
        <begin position="82"/>
        <end position="175"/>
    </location>
</feature>
<feature type="repeat" description="Solcar 2">
    <location>
        <begin position="187"/>
        <end position="280"/>
    </location>
</feature>
<feature type="repeat" description="Solcar 3">
    <location>
        <begin position="288"/>
        <end position="374"/>
    </location>
</feature>
<feature type="region of interest" description="Important for transport activity" evidence="3">
    <location>
        <begin position="315"/>
        <end position="320"/>
    </location>
</feature>
<feature type="short sequence motif" description="Nucleotide carrier signature motif" evidence="2">
    <location>
        <begin position="315"/>
        <end position="320"/>
    </location>
</feature>
<feature type="binding site" evidence="2">
    <location>
        <position position="157"/>
    </location>
    <ligand>
        <name>ADP</name>
        <dbReference type="ChEBI" id="CHEBI:456216"/>
    </ligand>
</feature>
<feature type="binding site" evidence="2">
    <location>
        <position position="169"/>
    </location>
    <ligand>
        <name>ADP</name>
        <dbReference type="ChEBI" id="CHEBI:456216"/>
    </ligand>
</feature>
<feature type="binding site" evidence="2">
    <location>
        <position position="315"/>
    </location>
    <ligand>
        <name>ADP</name>
        <dbReference type="ChEBI" id="CHEBI:456216"/>
    </ligand>
</feature>
<feature type="sequence conflict" description="In Ref. 1; CAA48579." evidence="8" ref="1">
    <original>G</original>
    <variation>R</variation>
    <location>
        <position position="228"/>
    </location>
</feature>
<comment type="function">
    <text evidence="1 5">ADP:ATP antiporter that mediates import of ADP into the mitochondrial matrix for ATP synthesis, and export of ATP out to fuel the cell (By similarity). Cycles between the cytoplasmic-open state (c-state) and the matrix-open state (m-state): operates by the alternating access mechanism with a single substrate-binding site intermittently exposed to either the cytosolic (c-state) or matrix (m-state) side of the inner mitochondrial membrane (By similarity).</text>
</comment>
<comment type="catalytic activity">
    <reaction evidence="5">
        <text>ADP(in) + ATP(out) = ADP(out) + ATP(in)</text>
        <dbReference type="Rhea" id="RHEA:34999"/>
        <dbReference type="ChEBI" id="CHEBI:30616"/>
        <dbReference type="ChEBI" id="CHEBI:456216"/>
    </reaction>
    <physiologicalReaction direction="left-to-right" evidence="5">
        <dbReference type="Rhea" id="RHEA:35000"/>
    </physiologicalReaction>
</comment>
<comment type="activity regulation">
    <text evidence="1">The matrix-open state (m-state) is inhibited by the membrane-permeable bongkrekic acid (BKA). The cytoplasmic-open state (c-state) is inhibited by the membrane-impermeable toxic inhibitor carboxyatractyloside (CATR).</text>
</comment>
<comment type="subunit">
    <text evidence="1 2">Monomer.</text>
</comment>
<comment type="subcellular location">
    <subcellularLocation>
        <location evidence="7">Mitochondrion inner membrane</location>
        <topology evidence="6">Multi-pass membrane protein</topology>
    </subcellularLocation>
</comment>
<comment type="domain">
    <text evidence="4">The transmembrane helices are not perpendicular to the plane of the membrane, but cross the membrane at an angle. At least 2 of the odd-numbered transmembrane helices exhibit a sharp kink, due to the presence of a conserved proline residue.</text>
</comment>
<comment type="similarity">
    <text evidence="8">Belongs to the mitochondrial carrier (TC 2.A.29) family.</text>
</comment>